<feature type="chain" id="PRO_1000187199" description="L-fucose mutarotase">
    <location>
        <begin position="1"/>
        <end position="140"/>
    </location>
</feature>
<feature type="active site" description="Proton donor" evidence="1">
    <location>
        <position position="22"/>
    </location>
</feature>
<feature type="binding site" evidence="1">
    <location>
        <position position="30"/>
    </location>
    <ligand>
        <name>substrate</name>
    </ligand>
</feature>
<feature type="binding site" evidence="1">
    <location>
        <position position="107"/>
    </location>
    <ligand>
        <name>substrate</name>
    </ligand>
</feature>
<feature type="binding site" evidence="1">
    <location>
        <begin position="129"/>
        <end position="131"/>
    </location>
    <ligand>
        <name>substrate</name>
    </ligand>
</feature>
<organism>
    <name type="scientific">Salmonella paratyphi C (strain RKS4594)</name>
    <dbReference type="NCBI Taxonomy" id="476213"/>
    <lineage>
        <taxon>Bacteria</taxon>
        <taxon>Pseudomonadati</taxon>
        <taxon>Pseudomonadota</taxon>
        <taxon>Gammaproteobacteria</taxon>
        <taxon>Enterobacterales</taxon>
        <taxon>Enterobacteriaceae</taxon>
        <taxon>Salmonella</taxon>
    </lineage>
</organism>
<name>FUCM_SALPC</name>
<keyword id="KW-0119">Carbohydrate metabolism</keyword>
<keyword id="KW-0963">Cytoplasm</keyword>
<keyword id="KW-0294">Fucose metabolism</keyword>
<keyword id="KW-0413">Isomerase</keyword>
<gene>
    <name evidence="1" type="primary">fucU</name>
    <name type="ordered locus">SPC_3037</name>
</gene>
<evidence type="ECO:0000255" key="1">
    <source>
        <dbReference type="HAMAP-Rule" id="MF_01662"/>
    </source>
</evidence>
<accession>C0PXG7</accession>
<comment type="function">
    <text evidence="1">Involved in the anomeric conversion of L-fucose.</text>
</comment>
<comment type="catalytic activity">
    <reaction evidence="1">
        <text>alpha-L-fucose = beta-L-fucose</text>
        <dbReference type="Rhea" id="RHEA:25580"/>
        <dbReference type="ChEBI" id="CHEBI:42548"/>
        <dbReference type="ChEBI" id="CHEBI:42589"/>
        <dbReference type="EC" id="5.1.3.29"/>
    </reaction>
</comment>
<comment type="pathway">
    <text evidence="1">Carbohydrate metabolism; L-fucose metabolism.</text>
</comment>
<comment type="subunit">
    <text evidence="1">Homodecamer.</text>
</comment>
<comment type="subcellular location">
    <subcellularLocation>
        <location evidence="1">Cytoplasm</location>
    </subcellularLocation>
</comment>
<comment type="similarity">
    <text evidence="1">Belongs to the RbsD / FucU family. FucU mutarotase subfamily.</text>
</comment>
<protein>
    <recommendedName>
        <fullName evidence="1">L-fucose mutarotase</fullName>
        <ecNumber evidence="1">5.1.3.29</ecNumber>
    </recommendedName>
    <alternativeName>
        <fullName evidence="1">Fucose 1-epimerase</fullName>
    </alternativeName>
    <alternativeName>
        <fullName evidence="1">Type-2 mutarotase</fullName>
    </alternativeName>
</protein>
<proteinExistence type="inferred from homology"/>
<sequence length="140" mass="15254">MLKTISPLISPTLLKVLAEMGHGDEIIFSDAHFPAHSLGPQVIRADGLSVSDLLRAIIPLFELDSYAPPLVMMAAVEGDTLDPSVEARYRDALSLEAPCPDIVRIDRYAFYERAQKAFAIVITGECAKYGNILLKKGVTP</sequence>
<reference key="1">
    <citation type="journal article" date="2009" name="PLoS ONE">
        <title>Salmonella paratyphi C: genetic divergence from Salmonella choleraesuis and pathogenic convergence with Salmonella typhi.</title>
        <authorList>
            <person name="Liu W.-Q."/>
            <person name="Feng Y."/>
            <person name="Wang Y."/>
            <person name="Zou Q.-H."/>
            <person name="Chen F."/>
            <person name="Guo J.-T."/>
            <person name="Peng Y.-H."/>
            <person name="Jin Y."/>
            <person name="Li Y.-G."/>
            <person name="Hu S.-N."/>
            <person name="Johnston R.N."/>
            <person name="Liu G.-R."/>
            <person name="Liu S.-L."/>
        </authorList>
    </citation>
    <scope>NUCLEOTIDE SEQUENCE [LARGE SCALE GENOMIC DNA]</scope>
    <source>
        <strain>RKS4594</strain>
    </source>
</reference>
<dbReference type="EC" id="5.1.3.29" evidence="1"/>
<dbReference type="EMBL" id="CP000857">
    <property type="protein sequence ID" value="ACN47125.1"/>
    <property type="molecule type" value="Genomic_DNA"/>
</dbReference>
<dbReference type="RefSeq" id="WP_000920848.1">
    <property type="nucleotide sequence ID" value="NC_012125.1"/>
</dbReference>
<dbReference type="SMR" id="C0PXG7"/>
<dbReference type="KEGG" id="sei:SPC_3037"/>
<dbReference type="HOGENOM" id="CLU_120075_1_0_6"/>
<dbReference type="UniPathway" id="UPA00956"/>
<dbReference type="Proteomes" id="UP000001599">
    <property type="component" value="Chromosome"/>
</dbReference>
<dbReference type="GO" id="GO:0005737">
    <property type="term" value="C:cytoplasm"/>
    <property type="evidence" value="ECO:0007669"/>
    <property type="project" value="UniProtKB-SubCell"/>
</dbReference>
<dbReference type="GO" id="GO:0042806">
    <property type="term" value="F:fucose binding"/>
    <property type="evidence" value="ECO:0007669"/>
    <property type="project" value="InterPro"/>
</dbReference>
<dbReference type="GO" id="GO:0036373">
    <property type="term" value="F:L-fucose mutarotase activity"/>
    <property type="evidence" value="ECO:0007669"/>
    <property type="project" value="UniProtKB-EC"/>
</dbReference>
<dbReference type="GO" id="GO:0036065">
    <property type="term" value="P:fucosylation"/>
    <property type="evidence" value="ECO:0007669"/>
    <property type="project" value="TreeGrafter"/>
</dbReference>
<dbReference type="GO" id="GO:0042354">
    <property type="term" value="P:L-fucose metabolic process"/>
    <property type="evidence" value="ECO:0007669"/>
    <property type="project" value="UniProtKB-UniRule"/>
</dbReference>
<dbReference type="FunFam" id="3.40.1650.10:FF:000001">
    <property type="entry name" value="L-fucose mutarotase"/>
    <property type="match status" value="1"/>
</dbReference>
<dbReference type="Gene3D" id="3.40.1650.10">
    <property type="entry name" value="RbsD-like domain"/>
    <property type="match status" value="1"/>
</dbReference>
<dbReference type="HAMAP" id="MF_01662">
    <property type="entry name" value="L_fucose_rotase"/>
    <property type="match status" value="1"/>
</dbReference>
<dbReference type="InterPro" id="IPR023751">
    <property type="entry name" value="L-fucose_mutarotase"/>
</dbReference>
<dbReference type="InterPro" id="IPR023750">
    <property type="entry name" value="RbsD-like_sf"/>
</dbReference>
<dbReference type="InterPro" id="IPR050443">
    <property type="entry name" value="RbsD/FucU_mutarotase"/>
</dbReference>
<dbReference type="InterPro" id="IPR007721">
    <property type="entry name" value="RbsD_FucU"/>
</dbReference>
<dbReference type="NCBIfam" id="NF011949">
    <property type="entry name" value="PRK15420.1"/>
    <property type="match status" value="1"/>
</dbReference>
<dbReference type="PANTHER" id="PTHR31690">
    <property type="entry name" value="FUCOSE MUTAROTASE"/>
    <property type="match status" value="1"/>
</dbReference>
<dbReference type="PANTHER" id="PTHR31690:SF4">
    <property type="entry name" value="FUCOSE MUTAROTASE"/>
    <property type="match status" value="1"/>
</dbReference>
<dbReference type="Pfam" id="PF05025">
    <property type="entry name" value="RbsD_FucU"/>
    <property type="match status" value="1"/>
</dbReference>
<dbReference type="SUPFAM" id="SSF102546">
    <property type="entry name" value="RbsD-like"/>
    <property type="match status" value="1"/>
</dbReference>